<comment type="function">
    <text evidence="1 4 5">Scaffold protein in the commander complex that is essential for endosomal recycling of transmembrane cargos; the commander complex is composed of the CCC subcomplex and the retriever subcomplex (By similarity). May modulate activity of cullin-RING E3 ubiquitin ligase (CRL) complexes (By similarity). May down-regulate activation of NF-kappa-B (By similarity). May have an accessory function in the survival motor neuron (SMN) complex (PubMed:28949413, PubMed:30563832). Required for neuromuscular function and organismal viability (PubMed:28949413).</text>
</comment>
<comment type="subunit">
    <text evidence="1 4">Component of the commander complex consisting of the CCC subcomplex and the retriever subcomplex (By similarity). Component of the CCC subcomplex (By similarity). Interacts with Smn; along with Sbat and Hez may form an accessory subcomplex involved in SMN complex function.</text>
</comment>
<comment type="disruption phenotype">
    <text evidence="4">RNAi-mediated knockdown is adult lethal (PubMed:28949413). Conditional RNAi-mediated knockdown in muscle cells is also adult lethal; adults show severe mobility defects, reduced flight capacity and don't survive beyond day 5 post eclosion (PubMed:28949413). Conditional RNAi-mediated knockdown in neurons or specifically in motor neurons reduces adult viability (PubMed:28949413).</text>
</comment>
<comment type="miscellaneous">
    <text evidence="6">'Valette' is named after a Grand Master of the Order of Malta and distinguished warrior, Jean Parisot de Valette.</text>
</comment>
<comment type="similarity">
    <text evidence="8">Belongs to the COMM domain-containing protein 10 family.</text>
</comment>
<comment type="caution">
    <text evidence="4 5 9">Hez, Sbat and Vlet were originally identified as orthologs of GEMIN6, GEMIN7 and GEMIN8 respectively, which in other organisms forms an accessory subcomplex of the SMN complex (PubMed:28949413). They were subsequently shown to be more closely related to LSM12, NAA38 and COMMD10 (PubMed:30563832). No GEMIN6, GEMIN7 or GEMIN8 orthologs have been identified in Dipteran organisms and it is possible that Hez, Sbat and Vlet have been co-opted to fulfill some of their function in the SMN complex.</text>
</comment>
<protein>
    <recommendedName>
        <fullName evidence="8">COMM domain-containing protein 10 homolog Vlet</fullName>
    </recommendedName>
    <alternativeName>
        <fullName evidence="6">Protein Valette</fullName>
    </alternativeName>
</protein>
<evidence type="ECO:0000250" key="1">
    <source>
        <dbReference type="UniProtKB" id="Q9Y6G5"/>
    </source>
</evidence>
<evidence type="ECO:0000255" key="2">
    <source>
        <dbReference type="PROSITE-ProRule" id="PRU00602"/>
    </source>
</evidence>
<evidence type="ECO:0000256" key="3">
    <source>
        <dbReference type="SAM" id="MobiDB-lite"/>
    </source>
</evidence>
<evidence type="ECO:0000269" key="4">
    <source>
    </source>
</evidence>
<evidence type="ECO:0000269" key="5">
    <source>
    </source>
</evidence>
<evidence type="ECO:0000303" key="6">
    <source>
    </source>
</evidence>
<evidence type="ECO:0000303" key="7">
    <source>
    </source>
</evidence>
<evidence type="ECO:0000305" key="8"/>
<evidence type="ECO:0000305" key="9">
    <source>
    </source>
</evidence>
<evidence type="ECO:0000312" key="10">
    <source>
        <dbReference type="EMBL" id="AAL39793.1"/>
    </source>
</evidence>
<evidence type="ECO:0000312" key="11">
    <source>
        <dbReference type="FlyBase" id="FBgn0030323"/>
    </source>
</evidence>
<evidence type="ECO:0000312" key="12">
    <source>
        <dbReference type="Proteomes" id="UP000000803"/>
    </source>
</evidence>
<reference evidence="12" key="1">
    <citation type="journal article" date="2000" name="Science">
        <title>The genome sequence of Drosophila melanogaster.</title>
        <authorList>
            <person name="Adams M.D."/>
            <person name="Celniker S.E."/>
            <person name="Holt R.A."/>
            <person name="Evans C.A."/>
            <person name="Gocayne J.D."/>
            <person name="Amanatides P.G."/>
            <person name="Scherer S.E."/>
            <person name="Li P.W."/>
            <person name="Hoskins R.A."/>
            <person name="Galle R.F."/>
            <person name="George R.A."/>
            <person name="Lewis S.E."/>
            <person name="Richards S."/>
            <person name="Ashburner M."/>
            <person name="Henderson S.N."/>
            <person name="Sutton G.G."/>
            <person name="Wortman J.R."/>
            <person name="Yandell M.D."/>
            <person name="Zhang Q."/>
            <person name="Chen L.X."/>
            <person name="Brandon R.C."/>
            <person name="Rogers Y.-H.C."/>
            <person name="Blazej R.G."/>
            <person name="Champe M."/>
            <person name="Pfeiffer B.D."/>
            <person name="Wan K.H."/>
            <person name="Doyle C."/>
            <person name="Baxter E.G."/>
            <person name="Helt G."/>
            <person name="Nelson C.R."/>
            <person name="Miklos G.L.G."/>
            <person name="Abril J.F."/>
            <person name="Agbayani A."/>
            <person name="An H.-J."/>
            <person name="Andrews-Pfannkoch C."/>
            <person name="Baldwin D."/>
            <person name="Ballew R.M."/>
            <person name="Basu A."/>
            <person name="Baxendale J."/>
            <person name="Bayraktaroglu L."/>
            <person name="Beasley E.M."/>
            <person name="Beeson K.Y."/>
            <person name="Benos P.V."/>
            <person name="Berman B.P."/>
            <person name="Bhandari D."/>
            <person name="Bolshakov S."/>
            <person name="Borkova D."/>
            <person name="Botchan M.R."/>
            <person name="Bouck J."/>
            <person name="Brokstein P."/>
            <person name="Brottier P."/>
            <person name="Burtis K.C."/>
            <person name="Busam D.A."/>
            <person name="Butler H."/>
            <person name="Cadieu E."/>
            <person name="Center A."/>
            <person name="Chandra I."/>
            <person name="Cherry J.M."/>
            <person name="Cawley S."/>
            <person name="Dahlke C."/>
            <person name="Davenport L.B."/>
            <person name="Davies P."/>
            <person name="de Pablos B."/>
            <person name="Delcher A."/>
            <person name="Deng Z."/>
            <person name="Mays A.D."/>
            <person name="Dew I."/>
            <person name="Dietz S.M."/>
            <person name="Dodson K."/>
            <person name="Doup L.E."/>
            <person name="Downes M."/>
            <person name="Dugan-Rocha S."/>
            <person name="Dunkov B.C."/>
            <person name="Dunn P."/>
            <person name="Durbin K.J."/>
            <person name="Evangelista C.C."/>
            <person name="Ferraz C."/>
            <person name="Ferriera S."/>
            <person name="Fleischmann W."/>
            <person name="Fosler C."/>
            <person name="Gabrielian A.E."/>
            <person name="Garg N.S."/>
            <person name="Gelbart W.M."/>
            <person name="Glasser K."/>
            <person name="Glodek A."/>
            <person name="Gong F."/>
            <person name="Gorrell J.H."/>
            <person name="Gu Z."/>
            <person name="Guan P."/>
            <person name="Harris M."/>
            <person name="Harris N.L."/>
            <person name="Harvey D.A."/>
            <person name="Heiman T.J."/>
            <person name="Hernandez J.R."/>
            <person name="Houck J."/>
            <person name="Hostin D."/>
            <person name="Houston K.A."/>
            <person name="Howland T.J."/>
            <person name="Wei M.-H."/>
            <person name="Ibegwam C."/>
            <person name="Jalali M."/>
            <person name="Kalush F."/>
            <person name="Karpen G.H."/>
            <person name="Ke Z."/>
            <person name="Kennison J.A."/>
            <person name="Ketchum K.A."/>
            <person name="Kimmel B.E."/>
            <person name="Kodira C.D."/>
            <person name="Kraft C.L."/>
            <person name="Kravitz S."/>
            <person name="Kulp D."/>
            <person name="Lai Z."/>
            <person name="Lasko P."/>
            <person name="Lei Y."/>
            <person name="Levitsky A.A."/>
            <person name="Li J.H."/>
            <person name="Li Z."/>
            <person name="Liang Y."/>
            <person name="Lin X."/>
            <person name="Liu X."/>
            <person name="Mattei B."/>
            <person name="McIntosh T.C."/>
            <person name="McLeod M.P."/>
            <person name="McPherson D."/>
            <person name="Merkulov G."/>
            <person name="Milshina N.V."/>
            <person name="Mobarry C."/>
            <person name="Morris J."/>
            <person name="Moshrefi A."/>
            <person name="Mount S.M."/>
            <person name="Moy M."/>
            <person name="Murphy B."/>
            <person name="Murphy L."/>
            <person name="Muzny D.M."/>
            <person name="Nelson D.L."/>
            <person name="Nelson D.R."/>
            <person name="Nelson K.A."/>
            <person name="Nixon K."/>
            <person name="Nusskern D.R."/>
            <person name="Pacleb J.M."/>
            <person name="Palazzolo M."/>
            <person name="Pittman G.S."/>
            <person name="Pan S."/>
            <person name="Pollard J."/>
            <person name="Puri V."/>
            <person name="Reese M.G."/>
            <person name="Reinert K."/>
            <person name="Remington K."/>
            <person name="Saunders R.D.C."/>
            <person name="Scheeler F."/>
            <person name="Shen H."/>
            <person name="Shue B.C."/>
            <person name="Siden-Kiamos I."/>
            <person name="Simpson M."/>
            <person name="Skupski M.P."/>
            <person name="Smith T.J."/>
            <person name="Spier E."/>
            <person name="Spradling A.C."/>
            <person name="Stapleton M."/>
            <person name="Strong R."/>
            <person name="Sun E."/>
            <person name="Svirskas R."/>
            <person name="Tector C."/>
            <person name="Turner R."/>
            <person name="Venter E."/>
            <person name="Wang A.H."/>
            <person name="Wang X."/>
            <person name="Wang Z.-Y."/>
            <person name="Wassarman D.A."/>
            <person name="Weinstock G.M."/>
            <person name="Weissenbach J."/>
            <person name="Williams S.M."/>
            <person name="Woodage T."/>
            <person name="Worley K.C."/>
            <person name="Wu D."/>
            <person name="Yang S."/>
            <person name="Yao Q.A."/>
            <person name="Ye J."/>
            <person name="Yeh R.-F."/>
            <person name="Zaveri J.S."/>
            <person name="Zhan M."/>
            <person name="Zhang G."/>
            <person name="Zhao Q."/>
            <person name="Zheng L."/>
            <person name="Zheng X.H."/>
            <person name="Zhong F.N."/>
            <person name="Zhong W."/>
            <person name="Zhou X."/>
            <person name="Zhu S.C."/>
            <person name="Zhu X."/>
            <person name="Smith H.O."/>
            <person name="Gibbs R.A."/>
            <person name="Myers E.W."/>
            <person name="Rubin G.M."/>
            <person name="Venter J.C."/>
        </authorList>
    </citation>
    <scope>NUCLEOTIDE SEQUENCE [LARGE SCALE GENOMIC DNA]</scope>
    <source>
        <strain evidence="12">Berkeley</strain>
    </source>
</reference>
<reference evidence="12" key="2">
    <citation type="journal article" date="2002" name="Genome Biol.">
        <title>Annotation of the Drosophila melanogaster euchromatic genome: a systematic review.</title>
        <authorList>
            <person name="Misra S."/>
            <person name="Crosby M.A."/>
            <person name="Mungall C.J."/>
            <person name="Matthews B.B."/>
            <person name="Campbell K.S."/>
            <person name="Hradecky P."/>
            <person name="Huang Y."/>
            <person name="Kaminker J.S."/>
            <person name="Millburn G.H."/>
            <person name="Prochnik S.E."/>
            <person name="Smith C.D."/>
            <person name="Tupy J.L."/>
            <person name="Whitfield E.J."/>
            <person name="Bayraktaroglu L."/>
            <person name="Berman B.P."/>
            <person name="Bettencourt B.R."/>
            <person name="Celniker S.E."/>
            <person name="de Grey A.D.N.J."/>
            <person name="Drysdale R.A."/>
            <person name="Harris N.L."/>
            <person name="Richter J."/>
            <person name="Russo S."/>
            <person name="Schroeder A.J."/>
            <person name="Shu S.Q."/>
            <person name="Stapleton M."/>
            <person name="Yamada C."/>
            <person name="Ashburner M."/>
            <person name="Gelbart W.M."/>
            <person name="Rubin G.M."/>
            <person name="Lewis S.E."/>
        </authorList>
    </citation>
    <scope>GENOME REANNOTATION</scope>
    <source>
        <strain evidence="12">Berkeley</strain>
    </source>
</reference>
<reference evidence="10" key="3">
    <citation type="submission" date="2003-02" db="EMBL/GenBank/DDBJ databases">
        <authorList>
            <person name="Stapleton M."/>
            <person name="Brokstein P."/>
            <person name="Hong L."/>
            <person name="Agbayani A."/>
            <person name="Carlson J."/>
            <person name="Champe M."/>
            <person name="Chavez C."/>
            <person name="Dorsett V."/>
            <person name="Dresnek D."/>
            <person name="Farfan D."/>
            <person name="Frise E."/>
            <person name="George R."/>
            <person name="Gonzalez M."/>
            <person name="Guarin H."/>
            <person name="Kronmiller B."/>
            <person name="Li P."/>
            <person name="Liao G."/>
            <person name="Miranda A."/>
            <person name="Mungall C.J."/>
            <person name="Nunoo J."/>
            <person name="Pacleb J."/>
            <person name="Paragas V."/>
            <person name="Park S."/>
            <person name="Patel S."/>
            <person name="Phouanenavong S."/>
            <person name="Wan K."/>
            <person name="Yu C."/>
            <person name="Lewis S.E."/>
            <person name="Rubin G.M."/>
            <person name="Celniker S."/>
        </authorList>
    </citation>
    <scope>NUCLEOTIDE SEQUENCE [LARGE SCALE MRNA]</scope>
    <source>
        <strain evidence="10">Berkeley</strain>
        <tissue evidence="10">Embryo</tissue>
    </source>
</reference>
<reference evidence="8" key="4">
    <citation type="journal article" date="2017" name="FEBS Lett.">
        <title>Novel interactors of the Drosophila Survival Motor Neuron (SMN) Complex suggest its full conservation.</title>
        <authorList>
            <person name="Lanfranco M."/>
            <person name="Cacciottolo R."/>
            <person name="Borg R.M."/>
            <person name="Vassallo N."/>
            <person name="Juge F."/>
            <person name="Bordonne R."/>
            <person name="Cauchi R.J."/>
        </authorList>
    </citation>
    <scope>FUNCTION</scope>
    <scope>INTERACTION WITH SMN</scope>
    <scope>DISRUPTION PHENOTYPE</scope>
    <scope>NOMENCLATURE</scope>
</reference>
<reference evidence="8" key="5">
    <citation type="journal article" date="2019" name="G3 (Bethesda)">
        <title>Composition of the Survival Motor Neuron (SMN) Complex in Drosophila melanogaster.</title>
        <authorList>
            <person name="Matera A.G."/>
            <person name="Raimer A.C."/>
            <person name="Schmidt C.A."/>
            <person name="Kelly J.A."/>
            <person name="Droby G.N."/>
            <person name="Baillat D."/>
            <person name="Ten Have S."/>
            <person name="Lamond A.I."/>
            <person name="Wagner E.J."/>
            <person name="Gray K.M."/>
        </authorList>
    </citation>
    <scope>FUNCTION</scope>
    <scope>SIMILARITY WITH COMMD10</scope>
    <scope>NOMENCLATURE</scope>
</reference>
<sequence length="238" mass="27023">MSINWIKITERAREGIKIINALPYETFTTVLFYTHRQMSPSVASASATSSTVGTSVTTTGRVDSSTEENPTSNTEPEYTLEELERLVGVPRQDFLLLIKTFSYILRRISTFIIKPSLLQRELREKLQLEDEAKIDAILRLWVRETTPIMNNLASKRYESNVIEDVAWKLNMEISSHCQQREKTPLAVLQMKTAVGEDINIEMTQPELMELYNQFESIQGELDAMLAMKTTGATAPGNQ</sequence>
<proteinExistence type="evidence at protein level"/>
<gene>
    <name evidence="6 11" type="primary">Vlet</name>
    <name evidence="7" type="synonym">CommD10</name>
    <name evidence="6" type="synonym">Gem8</name>
    <name evidence="11" type="ORF">CG2371</name>
</gene>
<organism evidence="12">
    <name type="scientific">Drosophila melanogaster</name>
    <name type="common">Fruit fly</name>
    <dbReference type="NCBI Taxonomy" id="7227"/>
    <lineage>
        <taxon>Eukaryota</taxon>
        <taxon>Metazoa</taxon>
        <taxon>Ecdysozoa</taxon>
        <taxon>Arthropoda</taxon>
        <taxon>Hexapoda</taxon>
        <taxon>Insecta</taxon>
        <taxon>Pterygota</taxon>
        <taxon>Neoptera</taxon>
        <taxon>Endopterygota</taxon>
        <taxon>Diptera</taxon>
        <taxon>Brachycera</taxon>
        <taxon>Muscomorpha</taxon>
        <taxon>Ephydroidea</taxon>
        <taxon>Drosophilidae</taxon>
        <taxon>Drosophila</taxon>
        <taxon>Sophophora</taxon>
    </lineage>
</organism>
<accession>Q9VYV9</accession>
<accession>Q9VYW0</accession>
<dbReference type="EMBL" id="AE014298">
    <property type="protein sequence ID" value="AAF48073.1"/>
    <property type="molecule type" value="Genomic_DNA"/>
</dbReference>
<dbReference type="EMBL" id="AY069648">
    <property type="protein sequence ID" value="AAL39793.1"/>
    <property type="molecule type" value="mRNA"/>
</dbReference>
<dbReference type="RefSeq" id="NP_572738.1">
    <property type="nucleotide sequence ID" value="NM_132510.3"/>
</dbReference>
<dbReference type="SMR" id="Q9VYV9"/>
<dbReference type="FunCoup" id="Q9VYV9">
    <property type="interactions" value="543"/>
</dbReference>
<dbReference type="STRING" id="7227.FBpp0073378"/>
<dbReference type="PaxDb" id="7227-FBpp0073378"/>
<dbReference type="DNASU" id="32116"/>
<dbReference type="EnsemblMetazoa" id="FBtr0073533">
    <property type="protein sequence ID" value="FBpp0073378"/>
    <property type="gene ID" value="FBgn0030323"/>
</dbReference>
<dbReference type="GeneID" id="32116"/>
<dbReference type="KEGG" id="dme:Dmel_CG2371"/>
<dbReference type="UCSC" id="CG2371-RB">
    <property type="organism name" value="d. melanogaster"/>
</dbReference>
<dbReference type="AGR" id="FB:FBgn0030323"/>
<dbReference type="CTD" id="32116"/>
<dbReference type="FlyBase" id="FBgn0030323">
    <property type="gene designation" value="Vlet"/>
</dbReference>
<dbReference type="VEuPathDB" id="VectorBase:FBgn0030323"/>
<dbReference type="eggNOG" id="ENOG502S8YF">
    <property type="taxonomic scope" value="Eukaryota"/>
</dbReference>
<dbReference type="GeneTree" id="ENSGT00390000001500"/>
<dbReference type="HOGENOM" id="CLU_101921_0_0_1"/>
<dbReference type="InParanoid" id="Q9VYV9"/>
<dbReference type="OMA" id="AWKLNVE"/>
<dbReference type="OrthoDB" id="77522at2759"/>
<dbReference type="Reactome" id="R-DME-8951664">
    <property type="pathway name" value="Neddylation"/>
</dbReference>
<dbReference type="BioGRID-ORCS" id="32116">
    <property type="hits" value="0 hits in 1 CRISPR screen"/>
</dbReference>
<dbReference type="GenomeRNAi" id="32116"/>
<dbReference type="Proteomes" id="UP000000803">
    <property type="component" value="Chromosome X"/>
</dbReference>
<dbReference type="Bgee" id="FBgn0030323">
    <property type="expression patterns" value="Expressed in medullary intrinsic neuron Mi1 (Drosophila) in brain and 79 other cell types or tissues"/>
</dbReference>
<dbReference type="ExpressionAtlas" id="Q9VYV9">
    <property type="expression patterns" value="baseline and differential"/>
</dbReference>
<dbReference type="GO" id="GO:0061744">
    <property type="term" value="P:motor behavior"/>
    <property type="evidence" value="ECO:0000315"/>
    <property type="project" value="FlyBase"/>
</dbReference>
<dbReference type="CDD" id="cd04758">
    <property type="entry name" value="Commd10"/>
    <property type="match status" value="1"/>
</dbReference>
<dbReference type="InterPro" id="IPR017920">
    <property type="entry name" value="COMM"/>
</dbReference>
<dbReference type="InterPro" id="IPR037361">
    <property type="entry name" value="COMMD10"/>
</dbReference>
<dbReference type="PANTHER" id="PTHR12333">
    <property type="entry name" value="COMM DOMAIN CONTAINING PROTEIN 10"/>
    <property type="match status" value="1"/>
</dbReference>
<dbReference type="PANTHER" id="PTHR12333:SF0">
    <property type="entry name" value="COMM DOMAIN-CONTAINING PROTEIN 10"/>
    <property type="match status" value="1"/>
</dbReference>
<dbReference type="Pfam" id="PF07258">
    <property type="entry name" value="COMM_domain"/>
    <property type="match status" value="1"/>
</dbReference>
<dbReference type="PROSITE" id="PS51269">
    <property type="entry name" value="COMM"/>
    <property type="match status" value="1"/>
</dbReference>
<keyword id="KW-1185">Reference proteome</keyword>
<feature type="chain" id="PRO_0000460833" description="COMM domain-containing protein 10 homolog Vlet">
    <location>
        <begin position="1"/>
        <end position="238"/>
    </location>
</feature>
<feature type="domain" description="COMM" evidence="2">
    <location>
        <begin position="161"/>
        <end position="225"/>
    </location>
</feature>
<feature type="region of interest" description="Disordered" evidence="3">
    <location>
        <begin position="43"/>
        <end position="78"/>
    </location>
</feature>
<feature type="compositionally biased region" description="Low complexity" evidence="3">
    <location>
        <begin position="43"/>
        <end position="77"/>
    </location>
</feature>
<name>COMDA_DROME</name>